<proteinExistence type="inferred from homology"/>
<dbReference type="EC" id="6.3.4.19" evidence="1"/>
<dbReference type="EMBL" id="BX908798">
    <property type="protein sequence ID" value="CAF23363.1"/>
    <property type="molecule type" value="Genomic_DNA"/>
</dbReference>
<dbReference type="SMR" id="Q6MDI6"/>
<dbReference type="STRING" id="264201.pc0639"/>
<dbReference type="KEGG" id="pcu:PC_RS09865"/>
<dbReference type="eggNOG" id="COG0037">
    <property type="taxonomic scope" value="Bacteria"/>
</dbReference>
<dbReference type="HOGENOM" id="CLU_018869_0_2_0"/>
<dbReference type="OrthoDB" id="9807403at2"/>
<dbReference type="Proteomes" id="UP000000529">
    <property type="component" value="Chromosome"/>
</dbReference>
<dbReference type="GO" id="GO:0005737">
    <property type="term" value="C:cytoplasm"/>
    <property type="evidence" value="ECO:0007669"/>
    <property type="project" value="UniProtKB-SubCell"/>
</dbReference>
<dbReference type="GO" id="GO:0005524">
    <property type="term" value="F:ATP binding"/>
    <property type="evidence" value="ECO:0007669"/>
    <property type="project" value="UniProtKB-UniRule"/>
</dbReference>
<dbReference type="GO" id="GO:0032267">
    <property type="term" value="F:tRNA(Ile)-lysidine synthase activity"/>
    <property type="evidence" value="ECO:0007669"/>
    <property type="project" value="UniProtKB-EC"/>
</dbReference>
<dbReference type="GO" id="GO:0006400">
    <property type="term" value="P:tRNA modification"/>
    <property type="evidence" value="ECO:0007669"/>
    <property type="project" value="UniProtKB-UniRule"/>
</dbReference>
<dbReference type="CDD" id="cd01992">
    <property type="entry name" value="TilS_N"/>
    <property type="match status" value="1"/>
</dbReference>
<dbReference type="Gene3D" id="3.40.50.620">
    <property type="entry name" value="HUPs"/>
    <property type="match status" value="1"/>
</dbReference>
<dbReference type="HAMAP" id="MF_01161">
    <property type="entry name" value="tRNA_Ile_lys_synt"/>
    <property type="match status" value="1"/>
</dbReference>
<dbReference type="InterPro" id="IPR014729">
    <property type="entry name" value="Rossmann-like_a/b/a_fold"/>
</dbReference>
<dbReference type="InterPro" id="IPR011063">
    <property type="entry name" value="TilS/TtcA_N"/>
</dbReference>
<dbReference type="InterPro" id="IPR012094">
    <property type="entry name" value="tRNA_Ile_lys_synt"/>
</dbReference>
<dbReference type="InterPro" id="IPR012795">
    <property type="entry name" value="tRNA_Ile_lys_synt_N"/>
</dbReference>
<dbReference type="NCBIfam" id="TIGR02432">
    <property type="entry name" value="lysidine_TilS_N"/>
    <property type="match status" value="1"/>
</dbReference>
<dbReference type="PANTHER" id="PTHR43033">
    <property type="entry name" value="TRNA(ILE)-LYSIDINE SYNTHASE-RELATED"/>
    <property type="match status" value="1"/>
</dbReference>
<dbReference type="PANTHER" id="PTHR43033:SF1">
    <property type="entry name" value="TRNA(ILE)-LYSIDINE SYNTHASE-RELATED"/>
    <property type="match status" value="1"/>
</dbReference>
<dbReference type="Pfam" id="PF01171">
    <property type="entry name" value="ATP_bind_3"/>
    <property type="match status" value="1"/>
</dbReference>
<dbReference type="SUPFAM" id="SSF52402">
    <property type="entry name" value="Adenine nucleotide alpha hydrolases-like"/>
    <property type="match status" value="1"/>
</dbReference>
<dbReference type="SUPFAM" id="SSF56037">
    <property type="entry name" value="PheT/TilS domain"/>
    <property type="match status" value="1"/>
</dbReference>
<name>TILS_PARUW</name>
<organism>
    <name type="scientific">Protochlamydia amoebophila (strain UWE25)</name>
    <dbReference type="NCBI Taxonomy" id="264201"/>
    <lineage>
        <taxon>Bacteria</taxon>
        <taxon>Pseudomonadati</taxon>
        <taxon>Chlamydiota</taxon>
        <taxon>Chlamydiia</taxon>
        <taxon>Parachlamydiales</taxon>
        <taxon>Parachlamydiaceae</taxon>
        <taxon>Candidatus Protochlamydia</taxon>
    </lineage>
</organism>
<reference key="1">
    <citation type="journal article" date="2004" name="Science">
        <title>Illuminating the evolutionary history of chlamydiae.</title>
        <authorList>
            <person name="Horn M."/>
            <person name="Collingro A."/>
            <person name="Schmitz-Esser S."/>
            <person name="Beier C.L."/>
            <person name="Purkhold U."/>
            <person name="Fartmann B."/>
            <person name="Brandt P."/>
            <person name="Nyakatura G.J."/>
            <person name="Droege M."/>
            <person name="Frishman D."/>
            <person name="Rattei T."/>
            <person name="Mewes H.-W."/>
            <person name="Wagner M."/>
        </authorList>
    </citation>
    <scope>NUCLEOTIDE SEQUENCE [LARGE SCALE GENOMIC DNA]</scope>
    <source>
        <strain>UWE25</strain>
    </source>
</reference>
<evidence type="ECO:0000255" key="1">
    <source>
        <dbReference type="HAMAP-Rule" id="MF_01161"/>
    </source>
</evidence>
<protein>
    <recommendedName>
        <fullName evidence="1">tRNA(Ile)-lysidine synthase</fullName>
        <ecNumber evidence="1">6.3.4.19</ecNumber>
    </recommendedName>
    <alternativeName>
        <fullName evidence="1">tRNA(Ile)-2-lysyl-cytidine synthase</fullName>
    </alternativeName>
    <alternativeName>
        <fullName evidence="1">tRNA(Ile)-lysidine synthetase</fullName>
    </alternativeName>
</protein>
<feature type="chain" id="PRO_0000181739" description="tRNA(Ile)-lysidine synthase">
    <location>
        <begin position="1"/>
        <end position="458"/>
    </location>
</feature>
<feature type="binding site" evidence="1">
    <location>
        <begin position="36"/>
        <end position="41"/>
    </location>
    <ligand>
        <name>ATP</name>
        <dbReference type="ChEBI" id="CHEBI:30616"/>
    </ligand>
</feature>
<sequence>MSCICLKNEKLNVINQVKRFIKKYCKSTQPLLLALSGGADSLSLFYCLLACRLEGILSFHVAHVDHGWREESAKEATILKNLAEQHQVPYHQLKIDLSQLAGNLEDACRKQRQKFFKEICLQNNLQAVCLGHQENDQVETVLKRILEGSHWSHFDGLKERMWHDQVQFLRPLLGIQKDEILAFLKGNQLKAFEDGTNCDERFMRARMRRTIIPDLNRSFGKKIDNSLVYIASEMSELKNFFLGRVSPLLGQIVKGPFGVYLNLANHPSIDLVEIKYLLRLISEQELFFLSRQILQRASEAIEKLEPQLSFEMGTKKIVIDRGHFFILSKKTACKNPNLQISGSSLQYYGKWMIKTNESFYHQNLQASTWLDGWRGYLKTYLPLDKYVLGQASKHAKLLRHHSTINKWWSSHHVPPFLRSFFPVIWQHNEIAHEFLTGLERQNLQEGEKCLQIELSYLT</sequence>
<accession>Q6MDI6</accession>
<keyword id="KW-0067">ATP-binding</keyword>
<keyword id="KW-0963">Cytoplasm</keyword>
<keyword id="KW-0436">Ligase</keyword>
<keyword id="KW-0547">Nucleotide-binding</keyword>
<keyword id="KW-1185">Reference proteome</keyword>
<keyword id="KW-0819">tRNA processing</keyword>
<comment type="function">
    <text evidence="1">Ligates lysine onto the cytidine present at position 34 of the AUA codon-specific tRNA(Ile) that contains the anticodon CAU, in an ATP-dependent manner. Cytidine is converted to lysidine, thus changing the amino acid specificity of the tRNA from methionine to isoleucine.</text>
</comment>
<comment type="catalytic activity">
    <reaction evidence="1">
        <text>cytidine(34) in tRNA(Ile2) + L-lysine + ATP = lysidine(34) in tRNA(Ile2) + AMP + diphosphate + H(+)</text>
        <dbReference type="Rhea" id="RHEA:43744"/>
        <dbReference type="Rhea" id="RHEA-COMP:10625"/>
        <dbReference type="Rhea" id="RHEA-COMP:10670"/>
        <dbReference type="ChEBI" id="CHEBI:15378"/>
        <dbReference type="ChEBI" id="CHEBI:30616"/>
        <dbReference type="ChEBI" id="CHEBI:32551"/>
        <dbReference type="ChEBI" id="CHEBI:33019"/>
        <dbReference type="ChEBI" id="CHEBI:82748"/>
        <dbReference type="ChEBI" id="CHEBI:83665"/>
        <dbReference type="ChEBI" id="CHEBI:456215"/>
        <dbReference type="EC" id="6.3.4.19"/>
    </reaction>
</comment>
<comment type="subcellular location">
    <subcellularLocation>
        <location evidence="1">Cytoplasm</location>
    </subcellularLocation>
</comment>
<comment type="domain">
    <text>The N-terminal region contains the highly conserved SGGXDS motif, predicted to be a P-loop motif involved in ATP binding.</text>
</comment>
<comment type="similarity">
    <text evidence="1">Belongs to the tRNA(Ile)-lysidine synthase family.</text>
</comment>
<gene>
    <name evidence="1" type="primary">tilS</name>
    <name type="ordered locus">pc0639</name>
</gene>